<accession>A5E968</accession>
<organism>
    <name type="scientific">Bradyrhizobium sp. (strain BTAi1 / ATCC BAA-1182)</name>
    <dbReference type="NCBI Taxonomy" id="288000"/>
    <lineage>
        <taxon>Bacteria</taxon>
        <taxon>Pseudomonadati</taxon>
        <taxon>Pseudomonadota</taxon>
        <taxon>Alphaproteobacteria</taxon>
        <taxon>Hyphomicrobiales</taxon>
        <taxon>Nitrobacteraceae</taxon>
        <taxon>Bradyrhizobium</taxon>
    </lineage>
</organism>
<protein>
    <recommendedName>
        <fullName evidence="1">Large ribosomal subunit protein bL27</fullName>
    </recommendedName>
    <alternativeName>
        <fullName evidence="3">50S ribosomal protein L27</fullName>
    </alternativeName>
</protein>
<dbReference type="EMBL" id="CP000494">
    <property type="protein sequence ID" value="ABQ32712.1"/>
    <property type="molecule type" value="Genomic_DNA"/>
</dbReference>
<dbReference type="RefSeq" id="WP_012040765.1">
    <property type="nucleotide sequence ID" value="NC_009485.1"/>
</dbReference>
<dbReference type="SMR" id="A5E968"/>
<dbReference type="STRING" id="288000.BBta_0426"/>
<dbReference type="KEGG" id="bbt:BBta_0426"/>
<dbReference type="eggNOG" id="COG0211">
    <property type="taxonomic scope" value="Bacteria"/>
</dbReference>
<dbReference type="HOGENOM" id="CLU_095424_4_1_5"/>
<dbReference type="OrthoDB" id="9803474at2"/>
<dbReference type="Proteomes" id="UP000000246">
    <property type="component" value="Chromosome"/>
</dbReference>
<dbReference type="GO" id="GO:0022625">
    <property type="term" value="C:cytosolic large ribosomal subunit"/>
    <property type="evidence" value="ECO:0007669"/>
    <property type="project" value="TreeGrafter"/>
</dbReference>
<dbReference type="GO" id="GO:0003735">
    <property type="term" value="F:structural constituent of ribosome"/>
    <property type="evidence" value="ECO:0007669"/>
    <property type="project" value="InterPro"/>
</dbReference>
<dbReference type="GO" id="GO:0006412">
    <property type="term" value="P:translation"/>
    <property type="evidence" value="ECO:0007669"/>
    <property type="project" value="UniProtKB-UniRule"/>
</dbReference>
<dbReference type="FunFam" id="2.40.50.100:FF:000020">
    <property type="entry name" value="50S ribosomal protein L27"/>
    <property type="match status" value="1"/>
</dbReference>
<dbReference type="Gene3D" id="2.40.50.100">
    <property type="match status" value="1"/>
</dbReference>
<dbReference type="HAMAP" id="MF_00539">
    <property type="entry name" value="Ribosomal_bL27"/>
    <property type="match status" value="1"/>
</dbReference>
<dbReference type="InterPro" id="IPR001684">
    <property type="entry name" value="Ribosomal_bL27"/>
</dbReference>
<dbReference type="InterPro" id="IPR018261">
    <property type="entry name" value="Ribosomal_bL27_CS"/>
</dbReference>
<dbReference type="NCBIfam" id="TIGR00062">
    <property type="entry name" value="L27"/>
    <property type="match status" value="1"/>
</dbReference>
<dbReference type="PANTHER" id="PTHR15893:SF0">
    <property type="entry name" value="LARGE RIBOSOMAL SUBUNIT PROTEIN BL27M"/>
    <property type="match status" value="1"/>
</dbReference>
<dbReference type="PANTHER" id="PTHR15893">
    <property type="entry name" value="RIBOSOMAL PROTEIN L27"/>
    <property type="match status" value="1"/>
</dbReference>
<dbReference type="Pfam" id="PF01016">
    <property type="entry name" value="Ribosomal_L27"/>
    <property type="match status" value="1"/>
</dbReference>
<dbReference type="PRINTS" id="PR00063">
    <property type="entry name" value="RIBOSOMALL27"/>
</dbReference>
<dbReference type="SUPFAM" id="SSF110324">
    <property type="entry name" value="Ribosomal L27 protein-like"/>
    <property type="match status" value="1"/>
</dbReference>
<dbReference type="PROSITE" id="PS00831">
    <property type="entry name" value="RIBOSOMAL_L27"/>
    <property type="match status" value="1"/>
</dbReference>
<feature type="chain" id="PRO_1000017421" description="Large ribosomal subunit protein bL27">
    <location>
        <begin position="1"/>
        <end position="89"/>
    </location>
</feature>
<feature type="region of interest" description="Disordered" evidence="2">
    <location>
        <begin position="1"/>
        <end position="21"/>
    </location>
</feature>
<gene>
    <name evidence="1" type="primary">rpmA</name>
    <name type="ordered locus">BBta_0426</name>
</gene>
<comment type="similarity">
    <text evidence="1">Belongs to the bacterial ribosomal protein bL27 family.</text>
</comment>
<name>RL27_BRASB</name>
<reference key="1">
    <citation type="journal article" date="2007" name="Science">
        <title>Legumes symbioses: absence of nod genes in photosynthetic bradyrhizobia.</title>
        <authorList>
            <person name="Giraud E."/>
            <person name="Moulin L."/>
            <person name="Vallenet D."/>
            <person name="Barbe V."/>
            <person name="Cytryn E."/>
            <person name="Avarre J.-C."/>
            <person name="Jaubert M."/>
            <person name="Simon D."/>
            <person name="Cartieaux F."/>
            <person name="Prin Y."/>
            <person name="Bena G."/>
            <person name="Hannibal L."/>
            <person name="Fardoux J."/>
            <person name="Kojadinovic M."/>
            <person name="Vuillet L."/>
            <person name="Lajus A."/>
            <person name="Cruveiller S."/>
            <person name="Rouy Z."/>
            <person name="Mangenot S."/>
            <person name="Segurens B."/>
            <person name="Dossat C."/>
            <person name="Franck W.L."/>
            <person name="Chang W.-S."/>
            <person name="Saunders E."/>
            <person name="Bruce D."/>
            <person name="Richardson P."/>
            <person name="Normand P."/>
            <person name="Dreyfus B."/>
            <person name="Pignol D."/>
            <person name="Stacey G."/>
            <person name="Emerich D."/>
            <person name="Vermeglio A."/>
            <person name="Medigue C."/>
            <person name="Sadowsky M."/>
        </authorList>
    </citation>
    <scope>NUCLEOTIDE SEQUENCE [LARGE SCALE GENOMIC DNA]</scope>
    <source>
        <strain>BTAi1 / ATCC BAA-1182</strain>
    </source>
</reference>
<sequence>MAHKKAGGSSRNGRDSKGKRLGIKAFGGERVIPGNIIARQRGTTWHPGLNVGMGTDHTLFAKIEGVVEFHARANRTFISVRPVAAQAAE</sequence>
<keyword id="KW-1185">Reference proteome</keyword>
<keyword id="KW-0687">Ribonucleoprotein</keyword>
<keyword id="KW-0689">Ribosomal protein</keyword>
<proteinExistence type="inferred from homology"/>
<evidence type="ECO:0000255" key="1">
    <source>
        <dbReference type="HAMAP-Rule" id="MF_00539"/>
    </source>
</evidence>
<evidence type="ECO:0000256" key="2">
    <source>
        <dbReference type="SAM" id="MobiDB-lite"/>
    </source>
</evidence>
<evidence type="ECO:0000305" key="3"/>